<reference key="1">
    <citation type="journal article" date="2011" name="J. Biol. Chem.">
        <title>The conserved Rieske oxygenase DAF-36/Neverland is a novel cholesterol-metabolizing enzyme.</title>
        <authorList>
            <person name="Yoshiyama-Yanagawa T."/>
            <person name="Enya S."/>
            <person name="Shimada-Niwa Y."/>
            <person name="Yaguchi S."/>
            <person name="Haramoto Y."/>
            <person name="Matsuya T."/>
            <person name="Shiomi K."/>
            <person name="Sasakura Y."/>
            <person name="Takahashi S."/>
            <person name="Asashima M."/>
            <person name="Kataoka H."/>
            <person name="Niwa R."/>
        </authorList>
    </citation>
    <scope>NUCLEOTIDE SEQUENCE [MRNA]</scope>
    <scope>FUNCTION</scope>
    <scope>CATALYTIC ACTIVITY</scope>
    <scope>PATHWAY</scope>
    <source>
        <tissue evidence="7">Embryo</tissue>
    </source>
</reference>
<reference key="2">
    <citation type="journal article" date="2002" name="Science">
        <title>The draft genome of Ciona intestinalis: insights into chordate and vertebrate origins.</title>
        <authorList>
            <person name="Dehal P."/>
            <person name="Satou Y."/>
            <person name="Campbell R.K."/>
            <person name="Chapman J."/>
            <person name="Degnan B."/>
            <person name="De Tomaso A."/>
            <person name="Davidson B."/>
            <person name="Di Gregorio A."/>
            <person name="Gelpke M."/>
            <person name="Goodstein D.M."/>
            <person name="Harafuji N."/>
            <person name="Hastings K.E."/>
            <person name="Ho I."/>
            <person name="Hotta K."/>
            <person name="Huang W."/>
            <person name="Kawashima T."/>
            <person name="Lemaire P."/>
            <person name="Martinez D."/>
            <person name="Meinertzhagen I.A."/>
            <person name="Necula S."/>
            <person name="Nonaka M."/>
            <person name="Putnam N."/>
            <person name="Rash S."/>
            <person name="Saiga H."/>
            <person name="Satake M."/>
            <person name="Terry A."/>
            <person name="Yamada L."/>
            <person name="Wang H.G."/>
            <person name="Awazu S."/>
            <person name="Azumi K."/>
            <person name="Boore J."/>
            <person name="Branno M."/>
            <person name="Chin-Bow S."/>
            <person name="DeSantis R."/>
            <person name="Doyle S."/>
            <person name="Francino P."/>
            <person name="Keys D.N."/>
            <person name="Haga S."/>
            <person name="Hayashi H."/>
            <person name="Hino K."/>
            <person name="Imai K.S."/>
            <person name="Inaba K."/>
            <person name="Kano S."/>
            <person name="Kobayashi K."/>
            <person name="Kobayashi M."/>
            <person name="Lee B.I."/>
            <person name="Makabe K.W."/>
            <person name="Manohar C."/>
            <person name="Matassi G."/>
            <person name="Medina M."/>
            <person name="Mochizuki Y."/>
            <person name="Mount S."/>
            <person name="Morishita T."/>
            <person name="Miura S."/>
            <person name="Nakayama A."/>
            <person name="Nishizaka S."/>
            <person name="Nomoto H."/>
            <person name="Ohta F."/>
            <person name="Oishi K."/>
            <person name="Rigoutsos I."/>
            <person name="Sano M."/>
            <person name="Sasaki A."/>
            <person name="Sasakura Y."/>
            <person name="Shoguchi E."/>
            <person name="Shin-i T."/>
            <person name="Spagnuolo A."/>
            <person name="Stainier D."/>
            <person name="Suzuki M.M."/>
            <person name="Tassy O."/>
            <person name="Takatori N."/>
            <person name="Tokuoka M."/>
            <person name="Yagi K."/>
            <person name="Yoshizaki F."/>
            <person name="Wada S."/>
            <person name="Zhang C."/>
            <person name="Hyatt P.D."/>
            <person name="Larimer F."/>
            <person name="Detter C."/>
            <person name="Doggett N."/>
            <person name="Glavina T."/>
            <person name="Hawkins T."/>
            <person name="Richardson P."/>
            <person name="Lucas S."/>
            <person name="Kohara Y."/>
            <person name="Levine M."/>
            <person name="Satoh N."/>
            <person name="Rokhsar D.S."/>
        </authorList>
    </citation>
    <scope>NUCLEOTIDE SEQUENCE [LARGE SCALE GENOMIC DNA]</scope>
</reference>
<comment type="function">
    <text evidence="3">Catalyzes the production of 7-dehydrocholesterol (7-DHC or cholesta-5,7-dien-3beta-ol) by inserting a double bond (desaturating) at the C7-C8 single bond of cholesterol. Essential regulator of steroid biosynthesis as this reaction is the first step in the synthesis of the steroid hormone Delta(7)-dafachronic acid.</text>
</comment>
<comment type="catalytic activity">
    <reaction evidence="3">
        <text>cholesterol + NADPH + O2 + H(+) = 7-dehydrocholesterol + NADP(+) + 2 H2O</text>
        <dbReference type="Rhea" id="RHEA:45024"/>
        <dbReference type="ChEBI" id="CHEBI:15377"/>
        <dbReference type="ChEBI" id="CHEBI:15378"/>
        <dbReference type="ChEBI" id="CHEBI:15379"/>
        <dbReference type="ChEBI" id="CHEBI:16113"/>
        <dbReference type="ChEBI" id="CHEBI:17759"/>
        <dbReference type="ChEBI" id="CHEBI:57783"/>
        <dbReference type="ChEBI" id="CHEBI:58349"/>
        <dbReference type="EC" id="1.14.19.21"/>
    </reaction>
    <physiologicalReaction direction="left-to-right" evidence="6">
        <dbReference type="Rhea" id="RHEA:45025"/>
    </physiologicalReaction>
</comment>
<comment type="catalytic activity">
    <reaction evidence="3">
        <text>cholesterol + NADH + O2 + H(+) = 7-dehydrocholesterol + NAD(+) + 2 H2O</text>
        <dbReference type="Rhea" id="RHEA:51644"/>
        <dbReference type="ChEBI" id="CHEBI:15377"/>
        <dbReference type="ChEBI" id="CHEBI:15378"/>
        <dbReference type="ChEBI" id="CHEBI:15379"/>
        <dbReference type="ChEBI" id="CHEBI:16113"/>
        <dbReference type="ChEBI" id="CHEBI:17759"/>
        <dbReference type="ChEBI" id="CHEBI:57540"/>
        <dbReference type="ChEBI" id="CHEBI:57945"/>
        <dbReference type="EC" id="1.14.19.21"/>
    </reaction>
    <physiologicalReaction direction="left-to-right" evidence="6">
        <dbReference type="Rhea" id="RHEA:51645"/>
    </physiologicalReaction>
</comment>
<comment type="cofactor">
    <cofactor evidence="2">
        <name>[2Fe-2S] cluster</name>
        <dbReference type="ChEBI" id="CHEBI:190135"/>
    </cofactor>
    <text evidence="2">Binds 1 [2Fe-2S] cluster per subunit.</text>
</comment>
<comment type="pathway">
    <text evidence="6">Steroid hormone biosynthesis; dafachronic acid biosynthesis.</text>
</comment>
<comment type="subcellular location">
    <subcellularLocation>
        <location evidence="1">Membrane</location>
        <topology evidence="1">Single-pass membrane protein</topology>
    </subcellularLocation>
</comment>
<comment type="similarity">
    <text evidence="5">Belongs to the cholesterol 7-desaturase family.</text>
</comment>
<comment type="sequence caution" evidence="5">
    <conflict type="erroneous gene model prediction">
        <sequence resource="EMBL" id="EAAA01002278"/>
    </conflict>
</comment>
<protein>
    <recommendedName>
        <fullName>Cholesterol 7-desaturase nvd 1</fullName>
        <ecNumber evidence="3">1.14.19.21</ecNumber>
    </recommendedName>
    <alternativeName>
        <fullName evidence="4">Neverland 1</fullName>
        <shortName evidence="4">Nvd-Ci-1</shortName>
    </alternativeName>
</protein>
<sequence>MISRIPRLLFENILVPVADVLTKSVSNFAGHKSDQSYNSNATRVSTISDEEIEFYLNLKSAVLLLCLALCIAGFSVLMYFLYVLVFVPYNRVKRLGSIGYQNHEEGHLSKKDIANLVRRRRKVGDDLPPVFPNGWFRLVDSQQLEPGQVKQVTALGEHFAVFRSKSGKASILDAYCPHMGGNLAVGGIVKNDCLECPFHGWRFDGDGKCVAIPYSEKIPTFAKTKSWPCREVNKAIFVWFHCDGKEPEWEIPDISEISTGKFTYKGRVEHHANTHIQDVPENGSDLAHLSHLHVPHAMSGANLSTQYSSWWNFAEHIFKAQCIGPADGEPHISLFYLTHYLHVFKRFKLLSLNLNVYQIGPGIVHLHFDSPFGKGVFVQTLTPVEPLHLVLTHNLHASWSIPVWLGRIFLYLEAIQVDRDVMIWNNKTFEPRPKLLKEDSLIAKYRRWYSQFYTENSPRLTLKSEDGNGW</sequence>
<proteinExistence type="evidence at protein level"/>
<accession>F7J186</accession>
<accession>A0A1W2W1E1</accession>
<accession>F6WF51</accession>
<name>NVD1_CIOIN</name>
<evidence type="ECO:0000255" key="1"/>
<evidence type="ECO:0000255" key="2">
    <source>
        <dbReference type="PROSITE-ProRule" id="PRU00628"/>
    </source>
</evidence>
<evidence type="ECO:0000269" key="3">
    <source>
    </source>
</evidence>
<evidence type="ECO:0000303" key="4">
    <source>
    </source>
</evidence>
<evidence type="ECO:0000305" key="5"/>
<evidence type="ECO:0000305" key="6">
    <source>
    </source>
</evidence>
<evidence type="ECO:0000312" key="7">
    <source>
        <dbReference type="EMBL" id="BAK39961.1"/>
    </source>
</evidence>
<dbReference type="EC" id="1.14.19.21" evidence="3"/>
<dbReference type="EMBL" id="AB607952">
    <property type="protein sequence ID" value="BAK39961.1"/>
    <property type="molecule type" value="mRNA"/>
</dbReference>
<dbReference type="EMBL" id="EAAA01002278">
    <property type="status" value="NOT_ANNOTATED_CDS"/>
    <property type="molecule type" value="Genomic_DNA"/>
</dbReference>
<dbReference type="RefSeq" id="NP_001265914.1">
    <property type="nucleotide sequence ID" value="NM_001278985.1"/>
</dbReference>
<dbReference type="SMR" id="F7J186"/>
<dbReference type="STRING" id="7719.ENSCINP00000012328"/>
<dbReference type="SwissLipids" id="SLP:000000092"/>
<dbReference type="GeneID" id="100177386"/>
<dbReference type="KEGG" id="cin:100177386"/>
<dbReference type="eggNOG" id="ENOG502QS20">
    <property type="taxonomic scope" value="Eukaryota"/>
</dbReference>
<dbReference type="HOGENOM" id="CLU_037178_0_0_1"/>
<dbReference type="InParanoid" id="F7J186"/>
<dbReference type="OrthoDB" id="548867at2759"/>
<dbReference type="TreeFam" id="TF313257"/>
<dbReference type="BRENDA" id="1.14.19.21">
    <property type="organism ID" value="1392"/>
</dbReference>
<dbReference type="UniPathway" id="UPA01020"/>
<dbReference type="Proteomes" id="UP000008144">
    <property type="component" value="Unplaced"/>
</dbReference>
<dbReference type="GO" id="GO:0005737">
    <property type="term" value="C:cytoplasm"/>
    <property type="evidence" value="ECO:0000318"/>
    <property type="project" value="GO_Central"/>
</dbReference>
<dbReference type="GO" id="GO:0016020">
    <property type="term" value="C:membrane"/>
    <property type="evidence" value="ECO:0007669"/>
    <property type="project" value="UniProtKB-SubCell"/>
</dbReference>
<dbReference type="GO" id="GO:0051537">
    <property type="term" value="F:2 iron, 2 sulfur cluster binding"/>
    <property type="evidence" value="ECO:0007669"/>
    <property type="project" value="UniProtKB-KW"/>
</dbReference>
<dbReference type="GO" id="GO:0170056">
    <property type="term" value="F:cholesterol 7-desaturase (NAD(P)H) activity"/>
    <property type="evidence" value="ECO:0007669"/>
    <property type="project" value="UniProtKB-EC"/>
</dbReference>
<dbReference type="GO" id="GO:0046872">
    <property type="term" value="F:metal ion binding"/>
    <property type="evidence" value="ECO:0007669"/>
    <property type="project" value="UniProtKB-KW"/>
</dbReference>
<dbReference type="GO" id="GO:0016491">
    <property type="term" value="F:oxidoreductase activity"/>
    <property type="evidence" value="ECO:0000318"/>
    <property type="project" value="GO_Central"/>
</dbReference>
<dbReference type="GO" id="GO:0008203">
    <property type="term" value="P:cholesterol metabolic process"/>
    <property type="evidence" value="ECO:0007669"/>
    <property type="project" value="UniProtKB-KW"/>
</dbReference>
<dbReference type="Gene3D" id="3.90.380.10">
    <property type="entry name" value="Naphthalene 1,2-dioxygenase Alpha Subunit, Chain A, domain 1"/>
    <property type="match status" value="1"/>
</dbReference>
<dbReference type="Gene3D" id="2.102.10.10">
    <property type="entry name" value="Rieske [2Fe-2S] iron-sulphur domain"/>
    <property type="match status" value="1"/>
</dbReference>
<dbReference type="InterPro" id="IPR050584">
    <property type="entry name" value="Cholesterol_7-desaturase"/>
</dbReference>
<dbReference type="InterPro" id="IPR045605">
    <property type="entry name" value="KshA-like_C"/>
</dbReference>
<dbReference type="InterPro" id="IPR017941">
    <property type="entry name" value="Rieske_2Fe-2S"/>
</dbReference>
<dbReference type="InterPro" id="IPR036922">
    <property type="entry name" value="Rieske_2Fe-2S_sf"/>
</dbReference>
<dbReference type="PANTHER" id="PTHR21266:SF32">
    <property type="entry name" value="CHOLESTEROL 7-DESATURASE NVD"/>
    <property type="match status" value="1"/>
</dbReference>
<dbReference type="PANTHER" id="PTHR21266">
    <property type="entry name" value="IRON-SULFUR DOMAIN CONTAINING PROTEIN"/>
    <property type="match status" value="1"/>
</dbReference>
<dbReference type="Pfam" id="PF19298">
    <property type="entry name" value="KshA_C"/>
    <property type="match status" value="1"/>
</dbReference>
<dbReference type="Pfam" id="PF00355">
    <property type="entry name" value="Rieske"/>
    <property type="match status" value="1"/>
</dbReference>
<dbReference type="SUPFAM" id="SSF55961">
    <property type="entry name" value="Bet v1-like"/>
    <property type="match status" value="1"/>
</dbReference>
<dbReference type="SUPFAM" id="SSF50022">
    <property type="entry name" value="ISP domain"/>
    <property type="match status" value="1"/>
</dbReference>
<dbReference type="PROSITE" id="PS51296">
    <property type="entry name" value="RIESKE"/>
    <property type="match status" value="1"/>
</dbReference>
<feature type="chain" id="PRO_0000452607" description="Cholesterol 7-desaturase nvd 1">
    <location>
        <begin position="1"/>
        <end position="470"/>
    </location>
</feature>
<feature type="transmembrane region" description="Helical" evidence="1">
    <location>
        <begin position="67"/>
        <end position="87"/>
    </location>
</feature>
<feature type="domain" description="Rieske" evidence="2">
    <location>
        <begin position="136"/>
        <end position="238"/>
    </location>
</feature>
<feature type="binding site" evidence="2">
    <location>
        <position position="176"/>
    </location>
    <ligand>
        <name>[2Fe-2S] cluster</name>
        <dbReference type="ChEBI" id="CHEBI:190135"/>
    </ligand>
</feature>
<feature type="binding site" evidence="2">
    <location>
        <position position="178"/>
    </location>
    <ligand>
        <name>[2Fe-2S] cluster</name>
        <dbReference type="ChEBI" id="CHEBI:190135"/>
    </ligand>
</feature>
<feature type="binding site" evidence="2">
    <location>
        <position position="196"/>
    </location>
    <ligand>
        <name>[2Fe-2S] cluster</name>
        <dbReference type="ChEBI" id="CHEBI:190135"/>
    </ligand>
</feature>
<feature type="binding site" evidence="2">
    <location>
        <position position="199"/>
    </location>
    <ligand>
        <name>[2Fe-2S] cluster</name>
        <dbReference type="ChEBI" id="CHEBI:190135"/>
    </ligand>
</feature>
<feature type="sequence conflict" description="In Ref. 1; BAK39961." ref="1">
    <original>H</original>
    <variation>N</variation>
    <location>
        <position position="296"/>
    </location>
</feature>
<keyword id="KW-0001">2Fe-2S</keyword>
<keyword id="KW-0153">Cholesterol metabolism</keyword>
<keyword id="KW-0408">Iron</keyword>
<keyword id="KW-0411">Iron-sulfur</keyword>
<keyword id="KW-0443">Lipid metabolism</keyword>
<keyword id="KW-0472">Membrane</keyword>
<keyword id="KW-0479">Metal-binding</keyword>
<keyword id="KW-0560">Oxidoreductase</keyword>
<keyword id="KW-1185">Reference proteome</keyword>
<keyword id="KW-0753">Steroid metabolism</keyword>
<keyword id="KW-1207">Sterol metabolism</keyword>
<keyword id="KW-0812">Transmembrane</keyword>
<keyword id="KW-1133">Transmembrane helix</keyword>
<gene>
    <name evidence="7" type="primary">nvd-Ci-1</name>
</gene>
<organism>
    <name type="scientific">Ciona intestinalis</name>
    <name type="common">Transparent sea squirt</name>
    <name type="synonym">Ascidia intestinalis</name>
    <dbReference type="NCBI Taxonomy" id="7719"/>
    <lineage>
        <taxon>Eukaryota</taxon>
        <taxon>Metazoa</taxon>
        <taxon>Chordata</taxon>
        <taxon>Tunicata</taxon>
        <taxon>Ascidiacea</taxon>
        <taxon>Phlebobranchia</taxon>
        <taxon>Cionidae</taxon>
        <taxon>Ciona</taxon>
    </lineage>
</organism>